<keyword id="KW-0091">Biomineralization</keyword>
<keyword id="KW-0903">Direct protein sequencing</keyword>
<keyword id="KW-1281">Magnetosome</keyword>
<keyword id="KW-0472">Membrane</keyword>
<keyword id="KW-0812">Transmembrane</keyword>
<keyword id="KW-1133">Transmembrane helix</keyword>
<comment type="function">
    <text evidence="8">Might be involved in magnetite crystal growth.</text>
</comment>
<comment type="subcellular location">
    <subcellularLocation>
        <location evidence="2 3">Magnetosome membrane</location>
        <topology evidence="1">Single-pass membrane protein</topology>
    </subcellularLocation>
    <text evidence="2">Tightly associated with magnetite crystals.</text>
</comment>
<comment type="PTM">
    <text evidence="7">Seen in gels as a band of about 5 kDa, with an N-terminus that corresponds to residue 8, suggesting it may undergo N-terminal cleavage.</text>
</comment>
<comment type="disruption phenotype">
    <text evidence="4">Still forms magnetite crystals, which are about half the size of wild-type but have a wild-type surface.</text>
</comment>
<comment type="miscellaneous">
    <text evidence="6">This bacteria makes up to 20 cubo-octahedral magnetosomes of about 45 nm in diameter which contain membrane-bound crystals of magnetite (Fe(3)O(4)).</text>
</comment>
<comment type="similarity">
    <text evidence="6">Belongs to the magnetosome MamD/Mms5 family.</text>
</comment>
<comment type="sequence caution" evidence="6">
    <conflict type="erroneous initiation">
        <sequence resource="EMBL-CDS" id="BAE49831"/>
    </conflict>
    <text>Extended N-terminus.</text>
</comment>
<protein>
    <recommendedName>
        <fullName evidence="5">Magnetosome protein Mms5</fullName>
    </recommendedName>
</protein>
<reference key="1">
    <citation type="journal article" date="2003" name="J. Biol. Chem.">
        <title>A novel protein tightly bound to bacterial magnetic particles in Magnetospirillum magneticum strain AMB-1.</title>
        <authorList>
            <person name="Arakaki A."/>
            <person name="Webb J."/>
            <person name="Matsunaga T."/>
        </authorList>
    </citation>
    <scope>NUCLEOTIDE SEQUENCE [GENOMIC DNA]</scope>
    <scope>PROTEIN SEQUENCE OF 8-32</scope>
    <scope>SUBCELLULAR LOCATION</scope>
    <scope>POSSIBLE PROTEOLYSIS</scope>
    <source>
        <strain>ATCC 700264 / AMB-1</strain>
    </source>
</reference>
<reference key="2">
    <citation type="journal article" date="2005" name="DNA Res.">
        <title>Complete genome sequence of the facultative anaerobic magnetotactic bacterium Magnetospirillum sp. strain AMB-1.</title>
        <authorList>
            <person name="Matsunaga T."/>
            <person name="Okamura Y."/>
            <person name="Fukuda Y."/>
            <person name="Wahyudi A.T."/>
            <person name="Murase Y."/>
            <person name="Takeyama H."/>
        </authorList>
    </citation>
    <scope>NUCLEOTIDE SEQUENCE [LARGE SCALE GENOMIC DNA]</scope>
    <scope>SUBCELLULAR LOCATION</scope>
    <source>
        <strain>ATCC 700264 / AMB-1</strain>
    </source>
</reference>
<reference key="3">
    <citation type="journal article" date="2014" name="Mol. Microbiol.">
        <title>Co-ordinated functions of Mms proteins define the surface structure of cubo-octahedral magnetite crystals in magnetotactic bacteria.</title>
        <authorList>
            <person name="Arakaki A."/>
            <person name="Yamagishi A."/>
            <person name="Fukuyo A."/>
            <person name="Tanaka M."/>
            <person name="Matsunaga T."/>
        </authorList>
    </citation>
    <scope>FUNCTION</scope>
    <scope>DISRUPTION PHENOTYPE</scope>
    <source>
        <strain>ATCC 700264 / AMB-1</strain>
    </source>
</reference>
<dbReference type="EMBL" id="AB096082">
    <property type="protein sequence ID" value="BAC65163.1"/>
    <property type="molecule type" value="Genomic_DNA"/>
</dbReference>
<dbReference type="EMBL" id="AP007255">
    <property type="protein sequence ID" value="BAE49831.1"/>
    <property type="status" value="ALT_INIT"/>
    <property type="molecule type" value="Genomic_DNA"/>
</dbReference>
<dbReference type="STRING" id="342108.amb1027"/>
<dbReference type="KEGG" id="mag:amb1027"/>
<dbReference type="HOGENOM" id="CLU_1325061_0_0_5"/>
<dbReference type="Proteomes" id="UP000007058">
    <property type="component" value="Chromosome"/>
</dbReference>
<dbReference type="GO" id="GO:0110146">
    <property type="term" value="C:magnetosome membrane"/>
    <property type="evidence" value="ECO:0000314"/>
    <property type="project" value="UniProtKB"/>
</dbReference>
<evidence type="ECO:0000255" key="1"/>
<evidence type="ECO:0000269" key="2">
    <source>
    </source>
</evidence>
<evidence type="ECO:0000269" key="3">
    <source>
    </source>
</evidence>
<evidence type="ECO:0000269" key="4">
    <source>
    </source>
</evidence>
<evidence type="ECO:0000303" key="5">
    <source>
    </source>
</evidence>
<evidence type="ECO:0000305" key="6"/>
<evidence type="ECO:0000305" key="7">
    <source>
    </source>
</evidence>
<evidence type="ECO:0000305" key="8">
    <source>
    </source>
</evidence>
<name>MMS5_PARM1</name>
<proteinExistence type="evidence at protein level"/>
<accession>Q2W8J4</accession>
<accession>Q83VL6</accession>
<gene>
    <name evidence="5" type="primary">mms5</name>
    <name type="ordered locus">amb1027</name>
</gene>
<feature type="chain" id="PRO_0000447794" description="Magnetosome protein Mms5">
    <location>
        <begin position="1"/>
        <end position="51"/>
    </location>
</feature>
<feature type="topological domain" description="Lumenal" evidence="6">
    <location>
        <begin position="1"/>
        <end position="12"/>
    </location>
</feature>
<feature type="transmembrane region" description="Helical" evidence="1">
    <location>
        <begin position="13"/>
        <end position="33"/>
    </location>
</feature>
<feature type="topological domain" description="Cytoplasmic" evidence="6">
    <location>
        <begin position="34"/>
        <end position="51"/>
    </location>
</feature>
<feature type="region of interest" description="LG region" evidence="6">
    <location>
        <begin position="9"/>
        <end position="16"/>
    </location>
</feature>
<sequence length="51" mass="4987">MLSAKGVSLGLGLGLGAWGPVLLGVVGVAGAIALYGYYKNRNAEPAAAEAV</sequence>
<organism>
    <name type="scientific">Paramagnetospirillum magneticum (strain ATCC 700264 / AMB-1)</name>
    <name type="common">Magnetospirillum magneticum</name>
    <dbReference type="NCBI Taxonomy" id="342108"/>
    <lineage>
        <taxon>Bacteria</taxon>
        <taxon>Pseudomonadati</taxon>
        <taxon>Pseudomonadota</taxon>
        <taxon>Alphaproteobacteria</taxon>
        <taxon>Rhodospirillales</taxon>
        <taxon>Magnetospirillaceae</taxon>
        <taxon>Paramagnetospirillum</taxon>
    </lineage>
</organism>